<gene>
    <name evidence="1" type="primary">nuoA</name>
    <name type="ordered locus">SbBS512_E2664</name>
</gene>
<feature type="chain" id="PRO_0000362778" description="NADH-quinone oxidoreductase subunit A">
    <location>
        <begin position="1"/>
        <end position="147"/>
    </location>
</feature>
<feature type="transmembrane region" description="Helical" evidence="1">
    <location>
        <begin position="16"/>
        <end position="36"/>
    </location>
</feature>
<feature type="transmembrane region" description="Helical" evidence="1">
    <location>
        <begin position="68"/>
        <end position="88"/>
    </location>
</feature>
<feature type="transmembrane region" description="Helical" evidence="1">
    <location>
        <begin position="98"/>
        <end position="118"/>
    </location>
</feature>
<accession>B2TW69</accession>
<dbReference type="EC" id="7.1.1.-" evidence="1"/>
<dbReference type="EMBL" id="CP001063">
    <property type="protein sequence ID" value="ACD07402.1"/>
    <property type="molecule type" value="Genomic_DNA"/>
</dbReference>
<dbReference type="RefSeq" id="WP_000062997.1">
    <property type="nucleotide sequence ID" value="NC_010658.1"/>
</dbReference>
<dbReference type="SMR" id="B2TW69"/>
<dbReference type="STRING" id="344609.SbBS512_E2664"/>
<dbReference type="GeneID" id="93774886"/>
<dbReference type="KEGG" id="sbc:SbBS512_E2664"/>
<dbReference type="HOGENOM" id="CLU_119549_2_0_6"/>
<dbReference type="Proteomes" id="UP000001030">
    <property type="component" value="Chromosome"/>
</dbReference>
<dbReference type="GO" id="GO:0030964">
    <property type="term" value="C:NADH dehydrogenase complex"/>
    <property type="evidence" value="ECO:0007669"/>
    <property type="project" value="TreeGrafter"/>
</dbReference>
<dbReference type="GO" id="GO:0005886">
    <property type="term" value="C:plasma membrane"/>
    <property type="evidence" value="ECO:0007669"/>
    <property type="project" value="UniProtKB-SubCell"/>
</dbReference>
<dbReference type="GO" id="GO:0008137">
    <property type="term" value="F:NADH dehydrogenase (ubiquinone) activity"/>
    <property type="evidence" value="ECO:0007669"/>
    <property type="project" value="InterPro"/>
</dbReference>
<dbReference type="GO" id="GO:0050136">
    <property type="term" value="F:NADH:ubiquinone reductase (non-electrogenic) activity"/>
    <property type="evidence" value="ECO:0007669"/>
    <property type="project" value="UniProtKB-UniRule"/>
</dbReference>
<dbReference type="GO" id="GO:0048038">
    <property type="term" value="F:quinone binding"/>
    <property type="evidence" value="ECO:0007669"/>
    <property type="project" value="UniProtKB-KW"/>
</dbReference>
<dbReference type="FunFam" id="1.20.58.1610:FF:000003">
    <property type="entry name" value="NADH-quinone oxidoreductase subunit A"/>
    <property type="match status" value="1"/>
</dbReference>
<dbReference type="Gene3D" id="1.20.58.1610">
    <property type="entry name" value="NADH:ubiquinone/plastoquinone oxidoreductase, chain 3"/>
    <property type="match status" value="1"/>
</dbReference>
<dbReference type="HAMAP" id="MF_01394">
    <property type="entry name" value="NDH1_NuoA"/>
    <property type="match status" value="1"/>
</dbReference>
<dbReference type="InterPro" id="IPR023043">
    <property type="entry name" value="NAD(P)H_OxRDtase_bac/plastid"/>
</dbReference>
<dbReference type="InterPro" id="IPR000440">
    <property type="entry name" value="NADH_UbQ/plastoQ_OxRdtase_su3"/>
</dbReference>
<dbReference type="InterPro" id="IPR038430">
    <property type="entry name" value="NDAH_ubi_oxred_su3_sf"/>
</dbReference>
<dbReference type="PANTHER" id="PTHR11058:SF21">
    <property type="entry name" value="NADH-QUINONE OXIDOREDUCTASE SUBUNIT A"/>
    <property type="match status" value="1"/>
</dbReference>
<dbReference type="PANTHER" id="PTHR11058">
    <property type="entry name" value="NADH-UBIQUINONE OXIDOREDUCTASE CHAIN 3"/>
    <property type="match status" value="1"/>
</dbReference>
<dbReference type="Pfam" id="PF00507">
    <property type="entry name" value="Oxidored_q4"/>
    <property type="match status" value="1"/>
</dbReference>
<organism>
    <name type="scientific">Shigella boydii serotype 18 (strain CDC 3083-94 / BS512)</name>
    <dbReference type="NCBI Taxonomy" id="344609"/>
    <lineage>
        <taxon>Bacteria</taxon>
        <taxon>Pseudomonadati</taxon>
        <taxon>Pseudomonadota</taxon>
        <taxon>Gammaproteobacteria</taxon>
        <taxon>Enterobacterales</taxon>
        <taxon>Enterobacteriaceae</taxon>
        <taxon>Shigella</taxon>
    </lineage>
</organism>
<sequence length="147" mass="16457">MSMSTSTEVIAHHWAFAIFLIVAIGLCCLMLVGGWFLGGRARARSKNVPFESGIDSVGSARLRLSAKFYLVAMFFVIFDVEALYLFAWSTSIRESGWVGFVEAAIFIFVLLAGLVYLVRIGALDWTPARSRRERMNPETNSIANRQR</sequence>
<proteinExistence type="inferred from homology"/>
<comment type="function">
    <text evidence="1">NDH-1 shuttles electrons from NADH, via FMN and iron-sulfur (Fe-S) centers, to quinones in the respiratory chain. The immediate electron acceptor for the enzyme in this species is believed to be ubiquinone. Couples the redox reaction to proton translocation (for every two electrons transferred, four hydrogen ions are translocated across the cytoplasmic membrane), and thus conserves the redox energy in a proton gradient.</text>
</comment>
<comment type="catalytic activity">
    <reaction evidence="1">
        <text>a quinone + NADH + 5 H(+)(in) = a quinol + NAD(+) + 4 H(+)(out)</text>
        <dbReference type="Rhea" id="RHEA:57888"/>
        <dbReference type="ChEBI" id="CHEBI:15378"/>
        <dbReference type="ChEBI" id="CHEBI:24646"/>
        <dbReference type="ChEBI" id="CHEBI:57540"/>
        <dbReference type="ChEBI" id="CHEBI:57945"/>
        <dbReference type="ChEBI" id="CHEBI:132124"/>
    </reaction>
</comment>
<comment type="subunit">
    <text evidence="1">NDH-1 is composed of 13 different subunits. Subunits NuoA, H, J, K, L, M, N constitute the membrane sector of the complex.</text>
</comment>
<comment type="subcellular location">
    <subcellularLocation>
        <location evidence="1">Cell inner membrane</location>
        <topology evidence="1">Multi-pass membrane protein</topology>
    </subcellularLocation>
</comment>
<comment type="similarity">
    <text evidence="1">Belongs to the complex I subunit 3 family.</text>
</comment>
<evidence type="ECO:0000255" key="1">
    <source>
        <dbReference type="HAMAP-Rule" id="MF_01394"/>
    </source>
</evidence>
<protein>
    <recommendedName>
        <fullName evidence="1">NADH-quinone oxidoreductase subunit A</fullName>
        <ecNumber evidence="1">7.1.1.-</ecNumber>
    </recommendedName>
    <alternativeName>
        <fullName evidence="1">NADH dehydrogenase I subunit A</fullName>
    </alternativeName>
    <alternativeName>
        <fullName evidence="1">NDH-1 subunit A</fullName>
    </alternativeName>
    <alternativeName>
        <fullName evidence="1">NUO1</fullName>
    </alternativeName>
</protein>
<keyword id="KW-0997">Cell inner membrane</keyword>
<keyword id="KW-1003">Cell membrane</keyword>
<keyword id="KW-0472">Membrane</keyword>
<keyword id="KW-0520">NAD</keyword>
<keyword id="KW-0874">Quinone</keyword>
<keyword id="KW-1185">Reference proteome</keyword>
<keyword id="KW-1278">Translocase</keyword>
<keyword id="KW-0812">Transmembrane</keyword>
<keyword id="KW-1133">Transmembrane helix</keyword>
<keyword id="KW-0813">Transport</keyword>
<keyword id="KW-0830">Ubiquinone</keyword>
<reference key="1">
    <citation type="submission" date="2008-05" db="EMBL/GenBank/DDBJ databases">
        <title>Complete sequence of Shigella boydii serotype 18 strain BS512.</title>
        <authorList>
            <person name="Rasko D.A."/>
            <person name="Rosovitz M."/>
            <person name="Maurelli A.T."/>
            <person name="Myers G."/>
            <person name="Seshadri R."/>
            <person name="Cer R."/>
            <person name="Jiang L."/>
            <person name="Ravel J."/>
            <person name="Sebastian Y."/>
        </authorList>
    </citation>
    <scope>NUCLEOTIDE SEQUENCE [LARGE SCALE GENOMIC DNA]</scope>
    <source>
        <strain>CDC 3083-94 / BS512</strain>
    </source>
</reference>
<name>NUOA_SHIB3</name>